<reference key="1">
    <citation type="journal article" date="2015" name="Genome Announc.">
        <title>Draft genome sequence of the cellulolytic fungus Chaetomium globosum.</title>
        <authorList>
            <person name="Cuomo C.A."/>
            <person name="Untereiner W.A."/>
            <person name="Ma L.-J."/>
            <person name="Grabherr M."/>
            <person name="Birren B.W."/>
        </authorList>
    </citation>
    <scope>NUCLEOTIDE SEQUENCE [LARGE SCALE GENOMIC DNA]</scope>
    <source>
        <strain>ATCC 6205 / CBS 148.51 / DSM 1962 / NBRC 6347 / NRRL 1970</strain>
    </source>
</reference>
<gene>
    <name type="primary">ATG8</name>
    <name type="ORF">CHGG_07993</name>
</gene>
<feature type="chain" id="PRO_0000317884" description="Autophagy-related protein 8">
    <location>
        <begin position="1"/>
        <end position="116"/>
    </location>
</feature>
<feature type="propeptide" id="PRO_0000317885" description="Removed in mature form" evidence="1">
    <location>
        <begin position="117"/>
        <end position="121"/>
    </location>
</feature>
<feature type="site" description="Cleavage; by ATG4" evidence="1">
    <location>
        <begin position="116"/>
        <end position="117"/>
    </location>
</feature>
<feature type="lipid moiety-binding region" description="Phosphatidylethanolamine amidated glycine" evidence="1">
    <location>
        <position position="116"/>
    </location>
</feature>
<evidence type="ECO:0000250" key="1">
    <source>
        <dbReference type="UniProtKB" id="P38182"/>
    </source>
</evidence>
<evidence type="ECO:0000305" key="2"/>
<dbReference type="EMBL" id="CH408033">
    <property type="protein sequence ID" value="EAQ86740.1"/>
    <property type="molecule type" value="Genomic_DNA"/>
</dbReference>
<dbReference type="RefSeq" id="XP_001225649.1">
    <property type="nucleotide sequence ID" value="XM_001225648.1"/>
</dbReference>
<dbReference type="SMR" id="Q2GVL1"/>
<dbReference type="FunCoup" id="Q2GVL1">
    <property type="interactions" value="482"/>
</dbReference>
<dbReference type="STRING" id="306901.Q2GVL1"/>
<dbReference type="GeneID" id="4393318"/>
<dbReference type="VEuPathDB" id="FungiDB:CHGG_07993"/>
<dbReference type="eggNOG" id="KOG1654">
    <property type="taxonomic scope" value="Eukaryota"/>
</dbReference>
<dbReference type="HOGENOM" id="CLU_119276_0_1_1"/>
<dbReference type="InParanoid" id="Q2GVL1"/>
<dbReference type="OMA" id="AVYQEHK"/>
<dbReference type="OrthoDB" id="6738456at2759"/>
<dbReference type="Proteomes" id="UP000001056">
    <property type="component" value="Unassembled WGS sequence"/>
</dbReference>
<dbReference type="GO" id="GO:0000421">
    <property type="term" value="C:autophagosome membrane"/>
    <property type="evidence" value="ECO:0007669"/>
    <property type="project" value="UniProtKB-SubCell"/>
</dbReference>
<dbReference type="GO" id="GO:0031410">
    <property type="term" value="C:cytoplasmic vesicle"/>
    <property type="evidence" value="ECO:0007669"/>
    <property type="project" value="UniProtKB-KW"/>
</dbReference>
<dbReference type="GO" id="GO:0006914">
    <property type="term" value="P:autophagy"/>
    <property type="evidence" value="ECO:0007669"/>
    <property type="project" value="UniProtKB-KW"/>
</dbReference>
<dbReference type="GO" id="GO:0015031">
    <property type="term" value="P:protein transport"/>
    <property type="evidence" value="ECO:0007669"/>
    <property type="project" value="UniProtKB-KW"/>
</dbReference>
<dbReference type="CDD" id="cd16128">
    <property type="entry name" value="Ubl_ATG8"/>
    <property type="match status" value="1"/>
</dbReference>
<dbReference type="FunFam" id="3.10.20.90:FF:000010">
    <property type="entry name" value="Autophagy-related protein"/>
    <property type="match status" value="1"/>
</dbReference>
<dbReference type="Gene3D" id="3.10.20.90">
    <property type="entry name" value="Phosphatidylinositol 3-kinase Catalytic Subunit, Chain A, domain 1"/>
    <property type="match status" value="1"/>
</dbReference>
<dbReference type="InterPro" id="IPR004241">
    <property type="entry name" value="Atg8-like"/>
</dbReference>
<dbReference type="InterPro" id="IPR029071">
    <property type="entry name" value="Ubiquitin-like_domsf"/>
</dbReference>
<dbReference type="PANTHER" id="PTHR10969">
    <property type="entry name" value="MICROTUBULE-ASSOCIATED PROTEINS 1A/1B LIGHT CHAIN 3-RELATED"/>
    <property type="match status" value="1"/>
</dbReference>
<dbReference type="Pfam" id="PF02991">
    <property type="entry name" value="ATG8"/>
    <property type="match status" value="1"/>
</dbReference>
<dbReference type="SUPFAM" id="SSF54236">
    <property type="entry name" value="Ubiquitin-like"/>
    <property type="match status" value="1"/>
</dbReference>
<protein>
    <recommendedName>
        <fullName>Autophagy-related protein 8</fullName>
    </recommendedName>
    <alternativeName>
        <fullName>Autophagy-related ubiquitin-like modifier ATG8</fullName>
    </alternativeName>
</protein>
<proteinExistence type="inferred from homology"/>
<comment type="function">
    <text evidence="1">Ubiquitin-like modifier involved in autophagosome formation. With ATG4, mediates the delivery of the autophagosomes to the vacuole via the microtubule cytoskeleton. Required for selective autophagic degradation of the nucleus (nucleophagy) as well as for mitophagy which contributes to regulate mitochondrial quantity and quality by eliminating the mitochondria to a basal level to fulfill cellular energy requirements and preventing excess ROS production. Participates also in membrane fusion events that take place in the early secretory pathway. Also involved in endoplasmic reticulum-specific autophagic process and is essential for the survival of cells subjected to severe ER stress. The ATG8-PE conjugate mediates tethering between adjacent membranes and stimulates membrane hemifusion, leading to expansion of the autophagosomal membrane during autophagy.</text>
</comment>
<comment type="subcellular location">
    <subcellularLocation>
        <location evidence="1">Cytoplasmic vesicle</location>
        <location evidence="1">Autophagosome membrane</location>
        <topology evidence="1">Lipid-anchor</topology>
    </subcellularLocation>
    <subcellularLocation>
        <location evidence="1">Vacuole membrane</location>
        <topology evidence="1">Lipid-anchor</topology>
    </subcellularLocation>
</comment>
<comment type="PTM">
    <text evidence="1">The C-terminal 5 residues are removed by ATG4 to expose Gly-116 at the C-terminus. The c-terminal Gly is then amidated with phosphatidylethanolamine by an activating system similar to that for ubiquitin.</text>
</comment>
<comment type="similarity">
    <text evidence="2">Belongs to the ATG8 family.</text>
</comment>
<keyword id="KW-0072">Autophagy</keyword>
<keyword id="KW-0968">Cytoplasmic vesicle</keyword>
<keyword id="KW-0449">Lipoprotein</keyword>
<keyword id="KW-0472">Membrane</keyword>
<keyword id="KW-0653">Protein transport</keyword>
<keyword id="KW-1185">Reference proteome</keyword>
<keyword id="KW-0813">Transport</keyword>
<keyword id="KW-0833">Ubl conjugation pathway</keyword>
<keyword id="KW-0926">Vacuole</keyword>
<sequence length="121" mass="14098">MRSKFKDEHPFEKRKAEAERIRQKYADRIPVICEKVEKSDIATIDKKKYLVPSDLTVGQFVYVIRKRIKLSPEKAIFIFVDEVLPPTAALMSSIYEEHKDEDGFLYITYSGENTFGNFETA</sequence>
<accession>Q2GVL1</accession>
<organism>
    <name type="scientific">Chaetomium globosum (strain ATCC 6205 / CBS 148.51 / DSM 1962 / NBRC 6347 / NRRL 1970)</name>
    <name type="common">Soil fungus</name>
    <dbReference type="NCBI Taxonomy" id="306901"/>
    <lineage>
        <taxon>Eukaryota</taxon>
        <taxon>Fungi</taxon>
        <taxon>Dikarya</taxon>
        <taxon>Ascomycota</taxon>
        <taxon>Pezizomycotina</taxon>
        <taxon>Sordariomycetes</taxon>
        <taxon>Sordariomycetidae</taxon>
        <taxon>Sordariales</taxon>
        <taxon>Chaetomiaceae</taxon>
        <taxon>Chaetomium</taxon>
    </lineage>
</organism>
<name>ATG8_CHAGB</name>